<name>RS9_LACP7</name>
<gene>
    <name evidence="1" type="primary">rpsI</name>
    <name type="ordered locus">Cphy_3627</name>
</gene>
<dbReference type="EMBL" id="CP000885">
    <property type="protein sequence ID" value="ABX43974.1"/>
    <property type="molecule type" value="Genomic_DNA"/>
</dbReference>
<dbReference type="RefSeq" id="WP_012201622.1">
    <property type="nucleotide sequence ID" value="NC_010001.1"/>
</dbReference>
<dbReference type="SMR" id="A9KJF4"/>
<dbReference type="STRING" id="357809.Cphy_3627"/>
<dbReference type="KEGG" id="cpy:Cphy_3627"/>
<dbReference type="eggNOG" id="COG0103">
    <property type="taxonomic scope" value="Bacteria"/>
</dbReference>
<dbReference type="HOGENOM" id="CLU_046483_2_1_9"/>
<dbReference type="OrthoDB" id="9803965at2"/>
<dbReference type="Proteomes" id="UP000000370">
    <property type="component" value="Chromosome"/>
</dbReference>
<dbReference type="GO" id="GO:0022627">
    <property type="term" value="C:cytosolic small ribosomal subunit"/>
    <property type="evidence" value="ECO:0007669"/>
    <property type="project" value="TreeGrafter"/>
</dbReference>
<dbReference type="GO" id="GO:0003723">
    <property type="term" value="F:RNA binding"/>
    <property type="evidence" value="ECO:0007669"/>
    <property type="project" value="TreeGrafter"/>
</dbReference>
<dbReference type="GO" id="GO:0003735">
    <property type="term" value="F:structural constituent of ribosome"/>
    <property type="evidence" value="ECO:0007669"/>
    <property type="project" value="InterPro"/>
</dbReference>
<dbReference type="GO" id="GO:0006412">
    <property type="term" value="P:translation"/>
    <property type="evidence" value="ECO:0007669"/>
    <property type="project" value="UniProtKB-UniRule"/>
</dbReference>
<dbReference type="FunFam" id="3.30.230.10:FF:000001">
    <property type="entry name" value="30S ribosomal protein S9"/>
    <property type="match status" value="1"/>
</dbReference>
<dbReference type="Gene3D" id="3.30.230.10">
    <property type="match status" value="1"/>
</dbReference>
<dbReference type="HAMAP" id="MF_00532_B">
    <property type="entry name" value="Ribosomal_uS9_B"/>
    <property type="match status" value="1"/>
</dbReference>
<dbReference type="InterPro" id="IPR020568">
    <property type="entry name" value="Ribosomal_Su5_D2-typ_SF"/>
</dbReference>
<dbReference type="InterPro" id="IPR000754">
    <property type="entry name" value="Ribosomal_uS9"/>
</dbReference>
<dbReference type="InterPro" id="IPR023035">
    <property type="entry name" value="Ribosomal_uS9_bac/plastid"/>
</dbReference>
<dbReference type="InterPro" id="IPR020574">
    <property type="entry name" value="Ribosomal_uS9_CS"/>
</dbReference>
<dbReference type="InterPro" id="IPR014721">
    <property type="entry name" value="Ribsml_uS5_D2-typ_fold_subgr"/>
</dbReference>
<dbReference type="NCBIfam" id="NF001099">
    <property type="entry name" value="PRK00132.1"/>
    <property type="match status" value="1"/>
</dbReference>
<dbReference type="PANTHER" id="PTHR21569">
    <property type="entry name" value="RIBOSOMAL PROTEIN S9"/>
    <property type="match status" value="1"/>
</dbReference>
<dbReference type="PANTHER" id="PTHR21569:SF1">
    <property type="entry name" value="SMALL RIBOSOMAL SUBUNIT PROTEIN US9M"/>
    <property type="match status" value="1"/>
</dbReference>
<dbReference type="Pfam" id="PF00380">
    <property type="entry name" value="Ribosomal_S9"/>
    <property type="match status" value="1"/>
</dbReference>
<dbReference type="SUPFAM" id="SSF54211">
    <property type="entry name" value="Ribosomal protein S5 domain 2-like"/>
    <property type="match status" value="1"/>
</dbReference>
<dbReference type="PROSITE" id="PS00360">
    <property type="entry name" value="RIBOSOMAL_S9"/>
    <property type="match status" value="1"/>
</dbReference>
<sequence length="130" mass="14455">MAKAKYYGTGRRKSSIARVYLVPGTGKVTINKRDMDAYFGLETLKLIARQPLVLTETADKFDVLVNVHGGGFTGQAGAIRHGISRALLQADADYRPALKKAGFLTRDPRMKERKKYGLKAARRAPQFSKR</sequence>
<feature type="chain" id="PRO_1000081810" description="Small ribosomal subunit protein uS9">
    <location>
        <begin position="1"/>
        <end position="130"/>
    </location>
</feature>
<feature type="region of interest" description="Disordered" evidence="2">
    <location>
        <begin position="109"/>
        <end position="130"/>
    </location>
</feature>
<feature type="compositionally biased region" description="Basic residues" evidence="2">
    <location>
        <begin position="111"/>
        <end position="130"/>
    </location>
</feature>
<proteinExistence type="inferred from homology"/>
<keyword id="KW-1185">Reference proteome</keyword>
<keyword id="KW-0687">Ribonucleoprotein</keyword>
<keyword id="KW-0689">Ribosomal protein</keyword>
<protein>
    <recommendedName>
        <fullName evidence="1">Small ribosomal subunit protein uS9</fullName>
    </recommendedName>
    <alternativeName>
        <fullName evidence="3">30S ribosomal protein S9</fullName>
    </alternativeName>
</protein>
<comment type="similarity">
    <text evidence="1">Belongs to the universal ribosomal protein uS9 family.</text>
</comment>
<organism>
    <name type="scientific">Lachnoclostridium phytofermentans (strain ATCC 700394 / DSM 18823 / ISDg)</name>
    <name type="common">Clostridium phytofermentans</name>
    <dbReference type="NCBI Taxonomy" id="357809"/>
    <lineage>
        <taxon>Bacteria</taxon>
        <taxon>Bacillati</taxon>
        <taxon>Bacillota</taxon>
        <taxon>Clostridia</taxon>
        <taxon>Lachnospirales</taxon>
        <taxon>Lachnospiraceae</taxon>
    </lineage>
</organism>
<accession>A9KJF4</accession>
<evidence type="ECO:0000255" key="1">
    <source>
        <dbReference type="HAMAP-Rule" id="MF_00532"/>
    </source>
</evidence>
<evidence type="ECO:0000256" key="2">
    <source>
        <dbReference type="SAM" id="MobiDB-lite"/>
    </source>
</evidence>
<evidence type="ECO:0000305" key="3"/>
<reference key="1">
    <citation type="submission" date="2007-11" db="EMBL/GenBank/DDBJ databases">
        <title>Complete genome sequence of Clostridium phytofermentans ISDg.</title>
        <authorList>
            <person name="Leschine S.B."/>
            <person name="Warnick T.A."/>
            <person name="Blanchard J.L."/>
            <person name="Schnell D.J."/>
            <person name="Petit E.L."/>
            <person name="LaTouf W.G."/>
            <person name="Copeland A."/>
            <person name="Lucas S."/>
            <person name="Lapidus A."/>
            <person name="Barry K."/>
            <person name="Glavina del Rio T."/>
            <person name="Dalin E."/>
            <person name="Tice H."/>
            <person name="Pitluck S."/>
            <person name="Kiss H."/>
            <person name="Brettin T."/>
            <person name="Bruce D."/>
            <person name="Detter J.C."/>
            <person name="Han C."/>
            <person name="Kuske C."/>
            <person name="Schmutz J."/>
            <person name="Larimer F."/>
            <person name="Land M."/>
            <person name="Hauser L."/>
            <person name="Kyrpides N."/>
            <person name="Kim E.A."/>
            <person name="Richardson P."/>
        </authorList>
    </citation>
    <scope>NUCLEOTIDE SEQUENCE [LARGE SCALE GENOMIC DNA]</scope>
    <source>
        <strain>ATCC 700394 / DSM 18823 / ISDg</strain>
    </source>
</reference>